<organism>
    <name type="scientific">Thalassotalea agarivorans</name>
    <name type="common">Thalassomonas agarivorans</name>
    <dbReference type="NCBI Taxonomy" id="349064"/>
    <lineage>
        <taxon>Bacteria</taxon>
        <taxon>Pseudomonadati</taxon>
        <taxon>Pseudomonadota</taxon>
        <taxon>Gammaproteobacteria</taxon>
        <taxon>Alteromonadales</taxon>
        <taxon>Colwelliaceae</taxon>
        <taxon>Thalassotalea</taxon>
    </lineage>
</organism>
<gene>
    <name evidence="11" type="primary">agaA33</name>
</gene>
<proteinExistence type="evidence at protein level"/>
<keyword id="KW-0106">Calcium</keyword>
<keyword id="KW-0119">Carbohydrate metabolism</keyword>
<keyword id="KW-0903">Direct protein sequencing</keyword>
<keyword id="KW-0326">Glycosidase</keyword>
<keyword id="KW-0378">Hydrolase</keyword>
<keyword id="KW-0479">Metal-binding</keyword>
<keyword id="KW-0624">Polysaccharide degradation</keyword>
<keyword id="KW-0732">Signal</keyword>
<accession>A1IGV8</accession>
<reference evidence="10 11" key="1">
    <citation type="journal article" date="2006" name="J. Agric. Food Chem.">
        <title>Hyperproduction and application of alpha-agarase to enzymatic enhancement of antioxidant activity of porphyran.</title>
        <authorList>
            <person name="Hatada Y."/>
            <person name="Ohta Y."/>
            <person name="Horikoshi K."/>
        </authorList>
    </citation>
    <scope>NUCLEOTIDE SEQUENCE [GENOMIC DNA]</scope>
    <scope>PROTEIN SEQUENCE OF 685-696; 1181-1188 AND 1291-1298</scope>
    <scope>FUNCTION</scope>
    <scope>CATALYTIC ACTIVITY</scope>
    <scope>BIOPHYSICOCHEMICAL PROPERTIES</scope>
    <source>
        <strain evidence="11">JAMB-A33</strain>
    </source>
</reference>
<reference evidence="10" key="2">
    <citation type="journal article" date="2005" name="Curr. Microbiol.">
        <title>Purification and characterization of a novel alpha-agarase from a Thalassomonas sp.</title>
        <authorList>
            <person name="Ohta Y."/>
            <person name="Hatada Y."/>
            <person name="Miyazaki M."/>
            <person name="Nogi Y."/>
            <person name="Ito S."/>
            <person name="Horikoshi K."/>
        </authorList>
    </citation>
    <scope>PROTEIN SEQUENCE OF 1289-1298</scope>
    <scope>FUNCTION</scope>
    <scope>CATALYTIC ACTIVITY</scope>
    <scope>COFACTOR</scope>
    <scope>BIOPHYSICOCHEMICAL PROPERTIES</scope>
    <scope>SUBUNIT</scope>
    <source>
        <strain evidence="6">JAMB-A33</strain>
    </source>
</reference>
<comment type="function">
    <text evidence="6 7">Alpha-agarase. Hydrolyzes agarose, agarohexaose, neoagarohexaose and porphyran. Hydrolysis of porphyran by this enzyme improves its antioxidant activity. Does not hydrolyze kappa-carrageenan, iota-carrageenen or lambda-carrageenan.</text>
</comment>
<comment type="catalytic activity">
    <reaction evidence="6 7">
        <text>Endohydrolysis of 1,3-alpha-L-galactosidic linkages in agarose, yielding agarotetraose as the major product.</text>
        <dbReference type="EC" id="3.2.1.158"/>
    </reaction>
</comment>
<comment type="cofactor">
    <cofactor evidence="6">
        <name>Ca(2+)</name>
        <dbReference type="ChEBI" id="CHEBI:29108"/>
    </cofactor>
</comment>
<comment type="biophysicochemical properties">
    <phDependence>
        <text evidence="6 7">Optimum pH is 8.5. Active between pH 4.5 and 9.5, stable between pH 6.5 and 10.5.</text>
    </phDependence>
    <temperatureDependence>
        <text evidence="6 7">Optimum temperature is 45 degrees Celsius. Stable up to 40 degrees Celsius.</text>
    </temperatureDependence>
</comment>
<comment type="subunit">
    <text evidence="6">Monomer.</text>
</comment>
<comment type="similarity">
    <text evidence="1">Belongs to the glycosyl hydrolase 96 family.</text>
</comment>
<evidence type="ECO:0000250" key="1">
    <source>
        <dbReference type="UniProtKB" id="Q9LAP7"/>
    </source>
</evidence>
<evidence type="ECO:0000255" key="2"/>
<evidence type="ECO:0000255" key="3">
    <source>
        <dbReference type="PROSITE-ProRule" id="PRU00523"/>
    </source>
</evidence>
<evidence type="ECO:0000255" key="4">
    <source>
        <dbReference type="PROSITE-ProRule" id="PRU01164"/>
    </source>
</evidence>
<evidence type="ECO:0000256" key="5">
    <source>
        <dbReference type="SAM" id="MobiDB-lite"/>
    </source>
</evidence>
<evidence type="ECO:0000269" key="6">
    <source>
    </source>
</evidence>
<evidence type="ECO:0000269" key="7">
    <source>
    </source>
</evidence>
<evidence type="ECO:0000303" key="8">
    <source>
    </source>
</evidence>
<evidence type="ECO:0000303" key="9">
    <source>
    </source>
</evidence>
<evidence type="ECO:0000305" key="10"/>
<evidence type="ECO:0000312" key="11">
    <source>
        <dbReference type="EMBL" id="BAF44076.1"/>
    </source>
</evidence>
<protein>
    <recommendedName>
        <fullName evidence="9">Alpha-agarase</fullName>
        <ecNumber>3.2.1.158</ecNumber>
    </recommendedName>
    <alternativeName>
        <fullName evidence="8">AgaraseA33</fullName>
    </alternativeName>
</protein>
<name>AAGAR_THASX</name>
<dbReference type="EC" id="3.2.1.158"/>
<dbReference type="EMBL" id="AB211981">
    <property type="protein sequence ID" value="BAF44076.1"/>
    <property type="molecule type" value="Genomic_DNA"/>
</dbReference>
<dbReference type="STRING" id="349064.SAMN05660429_00916"/>
<dbReference type="CAZy" id="CBM6">
    <property type="family name" value="Carbohydrate-Binding Module Family 6"/>
</dbReference>
<dbReference type="CAZy" id="GH96">
    <property type="family name" value="Glycoside Hydrolase Family 96"/>
</dbReference>
<dbReference type="KEGG" id="ag:BAF44076"/>
<dbReference type="BioCyc" id="MetaCyc:MONOMER-16654"/>
<dbReference type="BRENDA" id="3.2.1.158">
    <property type="organism ID" value="11700"/>
</dbReference>
<dbReference type="GO" id="GO:0033953">
    <property type="term" value="F:alpha-agarase activity"/>
    <property type="evidence" value="ECO:0007669"/>
    <property type="project" value="UniProtKB-EC"/>
</dbReference>
<dbReference type="GO" id="GO:0005509">
    <property type="term" value="F:calcium ion binding"/>
    <property type="evidence" value="ECO:0007669"/>
    <property type="project" value="InterPro"/>
</dbReference>
<dbReference type="GO" id="GO:0030246">
    <property type="term" value="F:carbohydrate binding"/>
    <property type="evidence" value="ECO:0007669"/>
    <property type="project" value="InterPro"/>
</dbReference>
<dbReference type="GO" id="GO:0007155">
    <property type="term" value="P:cell adhesion"/>
    <property type="evidence" value="ECO:0007669"/>
    <property type="project" value="InterPro"/>
</dbReference>
<dbReference type="GO" id="GO:0000272">
    <property type="term" value="P:polysaccharide catabolic process"/>
    <property type="evidence" value="ECO:0007669"/>
    <property type="project" value="UniProtKB-KW"/>
</dbReference>
<dbReference type="CDD" id="cd04079">
    <property type="entry name" value="CBM6_agarase-like"/>
    <property type="match status" value="2"/>
</dbReference>
<dbReference type="Gene3D" id="2.60.120.260">
    <property type="entry name" value="Galactose-binding domain-like"/>
    <property type="match status" value="3"/>
</dbReference>
<dbReference type="Gene3D" id="3.20.20.80">
    <property type="entry name" value="Glycosidases"/>
    <property type="match status" value="1"/>
</dbReference>
<dbReference type="Gene3D" id="4.10.1080.10">
    <property type="entry name" value="TSP type-3 repeat"/>
    <property type="match status" value="2"/>
</dbReference>
<dbReference type="InterPro" id="IPR005084">
    <property type="entry name" value="CBM6"/>
</dbReference>
<dbReference type="InterPro" id="IPR006584">
    <property type="entry name" value="Cellulose-bd_IV"/>
</dbReference>
<dbReference type="InterPro" id="IPR008979">
    <property type="entry name" value="Galactose-bd-like_sf"/>
</dbReference>
<dbReference type="InterPro" id="IPR037524">
    <property type="entry name" value="PA14/GLEYA"/>
</dbReference>
<dbReference type="InterPro" id="IPR003367">
    <property type="entry name" value="Thrombospondin_3-like_rpt"/>
</dbReference>
<dbReference type="InterPro" id="IPR028974">
    <property type="entry name" value="TSP_type-3_rpt"/>
</dbReference>
<dbReference type="PANTHER" id="PTHR10199:SF119">
    <property type="entry name" value="RE20510P"/>
    <property type="match status" value="1"/>
</dbReference>
<dbReference type="PANTHER" id="PTHR10199">
    <property type="entry name" value="THROMBOSPONDIN"/>
    <property type="match status" value="1"/>
</dbReference>
<dbReference type="Pfam" id="PF03422">
    <property type="entry name" value="CBM_6"/>
    <property type="match status" value="1"/>
</dbReference>
<dbReference type="Pfam" id="PF02412">
    <property type="entry name" value="TSP_3"/>
    <property type="match status" value="6"/>
</dbReference>
<dbReference type="SMART" id="SM00606">
    <property type="entry name" value="CBD_IV"/>
    <property type="match status" value="1"/>
</dbReference>
<dbReference type="SUPFAM" id="SSF49785">
    <property type="entry name" value="Galactose-binding domain-like"/>
    <property type="match status" value="3"/>
</dbReference>
<dbReference type="SUPFAM" id="SSF103647">
    <property type="entry name" value="TSP type-3 repeat"/>
    <property type="match status" value="2"/>
</dbReference>
<dbReference type="PROSITE" id="PS51175">
    <property type="entry name" value="CBM6"/>
    <property type="match status" value="3"/>
</dbReference>
<dbReference type="PROSITE" id="PS51820">
    <property type="entry name" value="PA14"/>
    <property type="match status" value="1"/>
</dbReference>
<feature type="signal peptide" evidence="2">
    <location>
        <begin position="1"/>
        <end position="27"/>
    </location>
</feature>
<feature type="propeptide" id="PRO_0000397928" evidence="2 7">
    <location>
        <begin position="28"/>
        <end position="684"/>
    </location>
</feature>
<feature type="chain" id="PRO_0000397929" description="Alpha-agarase" evidence="7">
    <location>
        <begin position="685"/>
        <end position="1463"/>
    </location>
</feature>
<feature type="domain" description="PA14" evidence="4">
    <location>
        <begin position="534"/>
        <end position="677"/>
    </location>
</feature>
<feature type="domain" description="CBM6" evidence="3">
    <location>
        <begin position="701"/>
        <end position="832"/>
    </location>
</feature>
<feature type="region of interest" description="Disordered" evidence="5">
    <location>
        <begin position="166"/>
        <end position="191"/>
    </location>
</feature>
<feature type="region of interest" description="Disordered" evidence="5">
    <location>
        <begin position="512"/>
        <end position="549"/>
    </location>
</feature>
<feature type="compositionally biased region" description="Polar residues" evidence="5">
    <location>
        <begin position="518"/>
        <end position="536"/>
    </location>
</feature>
<sequence length="1463" mass="158250">MITSSKKIVSAMLSTSLWIGVASAAYAETTNVEAEGYSTIGGTYQDGNPQPINIYSVNGVQAINFVNRGDFAEYDVSVSTAGEYSIEYLIGTSIASGSAVEISVLVDGNWQSAGSTNVPLGQWDNFQALAANNNISLAQGTNRIKITGAGTHDWQWNLDAFSLTLVTPENPDNPDNPDNPDDGNTGQPGTPFTIEMEAFDATGSDDPRAQGMVIGERGYPEDKHTVVDSNQTTDWVDYNINFPVSGNYRIEMLASGQTSHATAILFVDNVQINEVAVDTGNQAVFLDFELTDSTYISAGAHTIRVQSGSQINEFSWMWFGDALTFTPLDGGSTDGDADNDGVLDSVDTCPNTPAGAQVDANGCEIIVDNDTDNDGVDNSIDQCPNTPAGAQVDANGCEIVAVVDADNDGVEDSLDMCPNTPAGAPVNGQGCADSQLDADNDGVSDDIDQCPSTPAGSVVDGTGCIVVTPPADSDNDGVVDTLDMCPNTAAGLTVDSQGCALSQLDSDNDGVTDDIDQCANTPSGETANATGCSSSQEGGGTDPDTPQPGLLYGELAGAMNVSDTNPNWERTTDLLQTEDSVKGNTTEVYTGFIYDADGHISFYEHIDDSVRLYIDGVLVLSNDSWEASSQTTDLNLTPGTHEIELRIGNADGGSGAVDGIGFGIDVDGGTNFVHPSTLSESIFTSVGEETGNPDLEQEGDIIVELESFVFTSTNGRVGSDSVEGFSPTATGVNWVTNGDYGDYMVTFEEPGTYGAYITISAANDGSYGARVDVDGWPVAWGYFGGTGSWDVSSENLLYGGTFVVEQAGEKVVRVEAIGGSDWQWSGDRVRFTRLGDVTAIPSPIYNPDDHFVAEIQGPQTDVTYLKKPVEIPANKKVLKSDVWYTYPQNRELEGYDNFGATGAFWGHPPEHDFYDDTVIMDWAVDAVYAFQAEGYEYTARGEFDWGYGWFTEYTTNPQPHYVRTLDDRNVRMTFMGYLSHDGYNNNWLSNHSPAFVPFMKSQVDQILKANPDKLMFDTQTNSTRSTDMRDFGGDFSPYAMENFRVWLSKKYSTGELAALGINDINSFDYGDFLRAQGVTHTSWSNAGDTLSGNIPLQEDYIYFNRDVWNQKFAEVLDYIRQQQPDIEIGASTHLFESRGYVFNENLTFLSGELNLGARTTISELPTNILVHLKGAQAVDKTLVYFPYPWEFDELRLQDAPRFGRGWVAQAYAYGGLFSIPANVWVGGEVWTWSPGADNYRDIYLFVRAQADLLDDYTSYSKVGLVHAMYSSMKAGFIDGGNQIQSSTKLLTEGNINFDLLVFGDEGYPVVPRPEDFDKFDHIFFDGDEQYLTAEQQALLDQQGDKVRHIGQRGTVSGIEITVSISGTESNETVSAVSRIHETDAAAPYVVHLVNRPFAGGVTPTLNNVEVAIPQSYFPEVVTGATLHLPDGTSTSLTLSTNADGDVVLPVNNLEVWGILELAH</sequence>